<gene>
    <name type="ordered locus">MJ0979</name>
</gene>
<evidence type="ECO:0000255" key="1"/>
<evidence type="ECO:0000305" key="2"/>
<name>Y979_METJA</name>
<keyword id="KW-1003">Cell membrane</keyword>
<keyword id="KW-0472">Membrane</keyword>
<keyword id="KW-1185">Reference proteome</keyword>
<keyword id="KW-0812">Transmembrane</keyword>
<keyword id="KW-1133">Transmembrane helix</keyword>
<dbReference type="EMBL" id="L77117">
    <property type="protein sequence ID" value="AAB98994.1"/>
    <property type="molecule type" value="Genomic_DNA"/>
</dbReference>
<dbReference type="PIR" id="C64422">
    <property type="entry name" value="C64422"/>
</dbReference>
<dbReference type="RefSeq" id="WP_010870493.1">
    <property type="nucleotide sequence ID" value="NC_000909.1"/>
</dbReference>
<dbReference type="PaxDb" id="243232-MJ_0979"/>
<dbReference type="EnsemblBacteria" id="AAB98994">
    <property type="protein sequence ID" value="AAB98994"/>
    <property type="gene ID" value="MJ_0979"/>
</dbReference>
<dbReference type="GeneID" id="1451877"/>
<dbReference type="KEGG" id="mja:MJ_0979"/>
<dbReference type="eggNOG" id="arCOG14832">
    <property type="taxonomic scope" value="Archaea"/>
</dbReference>
<dbReference type="HOGENOM" id="CLU_1381407_0_0_2"/>
<dbReference type="InParanoid" id="Q58389"/>
<dbReference type="OrthoDB" id="384693at2157"/>
<dbReference type="Proteomes" id="UP000000805">
    <property type="component" value="Chromosome"/>
</dbReference>
<dbReference type="GO" id="GO:0005886">
    <property type="term" value="C:plasma membrane"/>
    <property type="evidence" value="ECO:0007669"/>
    <property type="project" value="UniProtKB-SubCell"/>
</dbReference>
<accession>Q58389</accession>
<sequence>MLPKKIDYIKIALIVVGIIALFLPWLTISASTINIKTDEGIHLSVNLAPFRVSSDIKSDTNNIFVEMMMPYVKQYFDMAVKEKMSTFMMIFGIIPIILYIASIFVDKKAVVVGAGIAGITCASIFVVLFTVGLNSSDSGLALTGGKEVTPIDLITGVVNEKSSYLSKDIIKIQVGTGWYLTMIIGLALIAYPFIRKV</sequence>
<protein>
    <recommendedName>
        <fullName>Uncharacterized protein MJ0979</fullName>
    </recommendedName>
</protein>
<feature type="chain" id="PRO_0000107128" description="Uncharacterized protein MJ0979">
    <location>
        <begin position="1"/>
        <end position="197"/>
    </location>
</feature>
<feature type="transmembrane region" description="Helical" evidence="1">
    <location>
        <begin position="11"/>
        <end position="31"/>
    </location>
</feature>
<feature type="transmembrane region" description="Helical" evidence="1">
    <location>
        <begin position="85"/>
        <end position="105"/>
    </location>
</feature>
<feature type="transmembrane region" description="Helical" evidence="1">
    <location>
        <begin position="109"/>
        <end position="129"/>
    </location>
</feature>
<feature type="transmembrane region" description="Helical" evidence="1">
    <location>
        <begin position="174"/>
        <end position="194"/>
    </location>
</feature>
<organism>
    <name type="scientific">Methanocaldococcus jannaschii (strain ATCC 43067 / DSM 2661 / JAL-1 / JCM 10045 / NBRC 100440)</name>
    <name type="common">Methanococcus jannaschii</name>
    <dbReference type="NCBI Taxonomy" id="243232"/>
    <lineage>
        <taxon>Archaea</taxon>
        <taxon>Methanobacteriati</taxon>
        <taxon>Methanobacteriota</taxon>
        <taxon>Methanomada group</taxon>
        <taxon>Methanococci</taxon>
        <taxon>Methanococcales</taxon>
        <taxon>Methanocaldococcaceae</taxon>
        <taxon>Methanocaldococcus</taxon>
    </lineage>
</organism>
<proteinExistence type="predicted"/>
<comment type="subcellular location">
    <subcellularLocation>
        <location evidence="2">Cell membrane</location>
        <topology evidence="2">Multi-pass membrane protein</topology>
    </subcellularLocation>
</comment>
<reference key="1">
    <citation type="journal article" date="1996" name="Science">
        <title>Complete genome sequence of the methanogenic archaeon, Methanococcus jannaschii.</title>
        <authorList>
            <person name="Bult C.J."/>
            <person name="White O."/>
            <person name="Olsen G.J."/>
            <person name="Zhou L."/>
            <person name="Fleischmann R.D."/>
            <person name="Sutton G.G."/>
            <person name="Blake J.A."/>
            <person name="FitzGerald L.M."/>
            <person name="Clayton R.A."/>
            <person name="Gocayne J.D."/>
            <person name="Kerlavage A.R."/>
            <person name="Dougherty B.A."/>
            <person name="Tomb J.-F."/>
            <person name="Adams M.D."/>
            <person name="Reich C.I."/>
            <person name="Overbeek R."/>
            <person name="Kirkness E.F."/>
            <person name="Weinstock K.G."/>
            <person name="Merrick J.M."/>
            <person name="Glodek A."/>
            <person name="Scott J.L."/>
            <person name="Geoghagen N.S.M."/>
            <person name="Weidman J.F."/>
            <person name="Fuhrmann J.L."/>
            <person name="Nguyen D."/>
            <person name="Utterback T.R."/>
            <person name="Kelley J.M."/>
            <person name="Peterson J.D."/>
            <person name="Sadow P.W."/>
            <person name="Hanna M.C."/>
            <person name="Cotton M.D."/>
            <person name="Roberts K.M."/>
            <person name="Hurst M.A."/>
            <person name="Kaine B.P."/>
            <person name="Borodovsky M."/>
            <person name="Klenk H.-P."/>
            <person name="Fraser C.M."/>
            <person name="Smith H.O."/>
            <person name="Woese C.R."/>
            <person name="Venter J.C."/>
        </authorList>
    </citation>
    <scope>NUCLEOTIDE SEQUENCE [LARGE SCALE GENOMIC DNA]</scope>
    <source>
        <strain>ATCC 43067 / DSM 2661 / JAL-1 / JCM 10045 / NBRC 100440</strain>
    </source>
</reference>